<organism>
    <name type="scientific">Mycobacteroides abscessus (strain ATCC 19977 / DSM 44196 / CCUG 20993 / CIP 104536 / JCM 13569 / NCTC 13031 / TMC 1543 / L948)</name>
    <name type="common">Mycobacterium abscessus</name>
    <dbReference type="NCBI Taxonomy" id="561007"/>
    <lineage>
        <taxon>Bacteria</taxon>
        <taxon>Bacillati</taxon>
        <taxon>Actinomycetota</taxon>
        <taxon>Actinomycetes</taxon>
        <taxon>Mycobacteriales</taxon>
        <taxon>Mycobacteriaceae</taxon>
        <taxon>Mycobacteroides</taxon>
        <taxon>Mycobacteroides abscessus</taxon>
    </lineage>
</organism>
<dbReference type="EMBL" id="CU458896">
    <property type="protein sequence ID" value="CAM63973.1"/>
    <property type="molecule type" value="Genomic_DNA"/>
</dbReference>
<dbReference type="SMR" id="B1MH92"/>
<dbReference type="GeneID" id="93380838"/>
<dbReference type="KEGG" id="mab:MAB_3899c"/>
<dbReference type="Proteomes" id="UP000007137">
    <property type="component" value="Chromosome"/>
</dbReference>
<dbReference type="GO" id="GO:0005737">
    <property type="term" value="C:cytoplasm"/>
    <property type="evidence" value="ECO:0007669"/>
    <property type="project" value="UniProtKB-ARBA"/>
</dbReference>
<dbReference type="GO" id="GO:1990904">
    <property type="term" value="C:ribonucleoprotein complex"/>
    <property type="evidence" value="ECO:0007669"/>
    <property type="project" value="UniProtKB-KW"/>
</dbReference>
<dbReference type="GO" id="GO:0005840">
    <property type="term" value="C:ribosome"/>
    <property type="evidence" value="ECO:0007669"/>
    <property type="project" value="UniProtKB-KW"/>
</dbReference>
<dbReference type="GO" id="GO:0003735">
    <property type="term" value="F:structural constituent of ribosome"/>
    <property type="evidence" value="ECO:0007669"/>
    <property type="project" value="InterPro"/>
</dbReference>
<dbReference type="GO" id="GO:0006412">
    <property type="term" value="P:translation"/>
    <property type="evidence" value="ECO:0007669"/>
    <property type="project" value="UniProtKB-UniRule"/>
</dbReference>
<dbReference type="Gene3D" id="2.20.28.120">
    <property type="entry name" value="Ribosomal protein L33"/>
    <property type="match status" value="1"/>
</dbReference>
<dbReference type="HAMAP" id="MF_00294">
    <property type="entry name" value="Ribosomal_bL33"/>
    <property type="match status" value="1"/>
</dbReference>
<dbReference type="InterPro" id="IPR001705">
    <property type="entry name" value="Ribosomal_bL33"/>
</dbReference>
<dbReference type="InterPro" id="IPR018264">
    <property type="entry name" value="Ribosomal_bL33_CS"/>
</dbReference>
<dbReference type="InterPro" id="IPR038584">
    <property type="entry name" value="Ribosomal_bL33_sf"/>
</dbReference>
<dbReference type="InterPro" id="IPR011332">
    <property type="entry name" value="Ribosomal_zn-bd"/>
</dbReference>
<dbReference type="NCBIfam" id="NF001764">
    <property type="entry name" value="PRK00504.1"/>
    <property type="match status" value="1"/>
</dbReference>
<dbReference type="NCBIfam" id="NF001860">
    <property type="entry name" value="PRK00595.1"/>
    <property type="match status" value="1"/>
</dbReference>
<dbReference type="NCBIfam" id="TIGR01023">
    <property type="entry name" value="rpmG_bact"/>
    <property type="match status" value="1"/>
</dbReference>
<dbReference type="PANTHER" id="PTHR43168">
    <property type="entry name" value="50S RIBOSOMAL PROTEIN L33, CHLOROPLASTIC"/>
    <property type="match status" value="1"/>
</dbReference>
<dbReference type="PANTHER" id="PTHR43168:SF2">
    <property type="entry name" value="LARGE RIBOSOMAL SUBUNIT PROTEIN BL33C"/>
    <property type="match status" value="1"/>
</dbReference>
<dbReference type="Pfam" id="PF00471">
    <property type="entry name" value="Ribosomal_L33"/>
    <property type="match status" value="1"/>
</dbReference>
<dbReference type="SUPFAM" id="SSF57829">
    <property type="entry name" value="Zn-binding ribosomal proteins"/>
    <property type="match status" value="1"/>
</dbReference>
<dbReference type="PROSITE" id="PS00582">
    <property type="entry name" value="RIBOSOMAL_L33"/>
    <property type="match status" value="1"/>
</dbReference>
<accession>B1MH92</accession>
<name>RL332_MYCA9</name>
<feature type="chain" id="PRO_0000356544" description="Large ribosomal subunit protein bL33B">
    <location>
        <begin position="1"/>
        <end position="55"/>
    </location>
</feature>
<gene>
    <name evidence="1" type="primary">rpmG2</name>
    <name type="ordered locus">MAB_3899c</name>
</gene>
<sequence length="55" mass="6440">MASSTDVRPKITLACETCKHRNYITKKNRRNDPDRLEIKKFCPNCGSHQPHKESR</sequence>
<keyword id="KW-1185">Reference proteome</keyword>
<keyword id="KW-0687">Ribonucleoprotein</keyword>
<keyword id="KW-0689">Ribosomal protein</keyword>
<protein>
    <recommendedName>
        <fullName evidence="1">Large ribosomal subunit protein bL33B</fullName>
    </recommendedName>
    <alternativeName>
        <fullName evidence="1">50S ribosomal protein L33 2</fullName>
    </alternativeName>
</protein>
<reference key="1">
    <citation type="journal article" date="2009" name="PLoS ONE">
        <title>Non mycobacterial virulence genes in the genome of the emerging pathogen Mycobacterium abscessus.</title>
        <authorList>
            <person name="Ripoll F."/>
            <person name="Pasek S."/>
            <person name="Schenowitz C."/>
            <person name="Dossat C."/>
            <person name="Barbe V."/>
            <person name="Rottman M."/>
            <person name="Macheras E."/>
            <person name="Heym B."/>
            <person name="Herrmann J.L."/>
            <person name="Daffe M."/>
            <person name="Brosch R."/>
            <person name="Risler J.L."/>
            <person name="Gaillard J.L."/>
        </authorList>
    </citation>
    <scope>NUCLEOTIDE SEQUENCE [LARGE SCALE GENOMIC DNA]</scope>
    <source>
        <strain>ATCC 19977 / DSM 44196 / CCUG 20993 / CIP 104536 / JCM 13569 / NCTC 13031 / TMC 1543 / L948</strain>
    </source>
</reference>
<evidence type="ECO:0000255" key="1">
    <source>
        <dbReference type="HAMAP-Rule" id="MF_00294"/>
    </source>
</evidence>
<comment type="similarity">
    <text evidence="1">Belongs to the bacterial ribosomal protein bL33 family.</text>
</comment>
<proteinExistence type="inferred from homology"/>